<name>RBL2_HALNC</name>
<dbReference type="EC" id="4.1.1.39" evidence="1"/>
<dbReference type="EMBL" id="AF046932">
    <property type="protein sequence ID" value="AAD02442.1"/>
    <property type="molecule type" value="Genomic_DNA"/>
</dbReference>
<dbReference type="EMBL" id="CP001801">
    <property type="protein sequence ID" value="ACX95931.1"/>
    <property type="molecule type" value="Genomic_DNA"/>
</dbReference>
<dbReference type="RefSeq" id="WP_012823967.1">
    <property type="nucleotide sequence ID" value="NC_013422.1"/>
</dbReference>
<dbReference type="SMR" id="Q9ZHZ4"/>
<dbReference type="STRING" id="555778.Hneap_1095"/>
<dbReference type="KEGG" id="hna:Hneap_1095"/>
<dbReference type="eggNOG" id="COG1850">
    <property type="taxonomic scope" value="Bacteria"/>
</dbReference>
<dbReference type="HOGENOM" id="CLU_031450_3_1_6"/>
<dbReference type="OrthoDB" id="9770811at2"/>
<dbReference type="Proteomes" id="UP000009102">
    <property type="component" value="Chromosome"/>
</dbReference>
<dbReference type="GO" id="GO:0005737">
    <property type="term" value="C:cytoplasm"/>
    <property type="evidence" value="ECO:0007669"/>
    <property type="project" value="UniProtKB-SubCell"/>
</dbReference>
<dbReference type="GO" id="GO:0000287">
    <property type="term" value="F:magnesium ion binding"/>
    <property type="evidence" value="ECO:0007669"/>
    <property type="project" value="UniProtKB-UniRule"/>
</dbReference>
<dbReference type="GO" id="GO:0004497">
    <property type="term" value="F:monooxygenase activity"/>
    <property type="evidence" value="ECO:0007669"/>
    <property type="project" value="UniProtKB-KW"/>
</dbReference>
<dbReference type="GO" id="GO:0016984">
    <property type="term" value="F:ribulose-bisphosphate carboxylase activity"/>
    <property type="evidence" value="ECO:0007669"/>
    <property type="project" value="UniProtKB-UniRule"/>
</dbReference>
<dbReference type="GO" id="GO:0019253">
    <property type="term" value="P:reductive pentose-phosphate cycle"/>
    <property type="evidence" value="ECO:0007669"/>
    <property type="project" value="UniProtKB-KW"/>
</dbReference>
<dbReference type="CDD" id="cd08211">
    <property type="entry name" value="RuBisCO_large_II"/>
    <property type="match status" value="1"/>
</dbReference>
<dbReference type="Gene3D" id="3.20.20.110">
    <property type="entry name" value="Ribulose bisphosphate carboxylase, large subunit, C-terminal domain"/>
    <property type="match status" value="1"/>
</dbReference>
<dbReference type="Gene3D" id="3.30.70.150">
    <property type="entry name" value="RuBisCO large subunit, N-terminal domain"/>
    <property type="match status" value="1"/>
</dbReference>
<dbReference type="HAMAP" id="MF_01339">
    <property type="entry name" value="RuBisCO_L_type2"/>
    <property type="match status" value="1"/>
</dbReference>
<dbReference type="InterPro" id="IPR033966">
    <property type="entry name" value="RuBisCO"/>
</dbReference>
<dbReference type="InterPro" id="IPR020878">
    <property type="entry name" value="RuBisCo_large_chain_AS"/>
</dbReference>
<dbReference type="InterPro" id="IPR000685">
    <property type="entry name" value="RuBisCO_lsu_C"/>
</dbReference>
<dbReference type="InterPro" id="IPR036376">
    <property type="entry name" value="RuBisCO_lsu_C_sf"/>
</dbReference>
<dbReference type="InterPro" id="IPR017443">
    <property type="entry name" value="RuBisCO_lsu_fd_N"/>
</dbReference>
<dbReference type="InterPro" id="IPR036422">
    <property type="entry name" value="RuBisCO_lsu_N_sf"/>
</dbReference>
<dbReference type="InterPro" id="IPR020871">
    <property type="entry name" value="RuBisCO_lsuII"/>
</dbReference>
<dbReference type="NCBIfam" id="NF010002">
    <property type="entry name" value="PRK13475.1"/>
    <property type="match status" value="1"/>
</dbReference>
<dbReference type="PANTHER" id="PTHR42704">
    <property type="entry name" value="RIBULOSE BISPHOSPHATE CARBOXYLASE"/>
    <property type="match status" value="1"/>
</dbReference>
<dbReference type="PANTHER" id="PTHR42704:SF17">
    <property type="entry name" value="RIBULOSE BISPHOSPHATE CARBOXYLASE LARGE CHAIN"/>
    <property type="match status" value="1"/>
</dbReference>
<dbReference type="Pfam" id="PF00016">
    <property type="entry name" value="RuBisCO_large"/>
    <property type="match status" value="1"/>
</dbReference>
<dbReference type="Pfam" id="PF02788">
    <property type="entry name" value="RuBisCO_large_N"/>
    <property type="match status" value="1"/>
</dbReference>
<dbReference type="SUPFAM" id="SSF51649">
    <property type="entry name" value="RuBisCo, C-terminal domain"/>
    <property type="match status" value="1"/>
</dbReference>
<dbReference type="SUPFAM" id="SSF54966">
    <property type="entry name" value="RuBisCO, large subunit, small (N-terminal) domain"/>
    <property type="match status" value="1"/>
</dbReference>
<dbReference type="PROSITE" id="PS00157">
    <property type="entry name" value="RUBISCO_LARGE"/>
    <property type="match status" value="1"/>
</dbReference>
<reference key="1">
    <citation type="submission" date="1998-02" db="EMBL/GenBank/DDBJ databases">
        <title>A form II Rubisco gene and associated genes in Thiobacillus neapolitanus.</title>
        <authorList>
            <person name="Shively J.M."/>
        </authorList>
    </citation>
    <scope>NUCLEOTIDE SEQUENCE [GENOMIC DNA]</scope>
</reference>
<reference key="2">
    <citation type="submission" date="2009-10" db="EMBL/GenBank/DDBJ databases">
        <title>Complete sequence of Halothiobacillus neapolitanus c2.</title>
        <authorList>
            <consortium name="US DOE Joint Genome Institute"/>
            <person name="Lucas S."/>
            <person name="Copeland A."/>
            <person name="Lapidus A."/>
            <person name="Glavina del Rio T."/>
            <person name="Tice H."/>
            <person name="Bruce D."/>
            <person name="Goodwin L."/>
            <person name="Pitluck S."/>
            <person name="Davenport K."/>
            <person name="Brettin T."/>
            <person name="Detter J.C."/>
            <person name="Han C."/>
            <person name="Tapia R."/>
            <person name="Larimer F."/>
            <person name="Land M."/>
            <person name="Hauser L."/>
            <person name="Kyrpides N."/>
            <person name="Mikhailova N."/>
            <person name="Kerfeld C."/>
            <person name="Cannon G."/>
            <person name="Heinhort S."/>
        </authorList>
    </citation>
    <scope>NUCLEOTIDE SEQUENCE [LARGE SCALE GENOMIC DNA]</scope>
    <source>
        <strain>ATCC 23641 / c2</strain>
    </source>
</reference>
<reference key="3">
    <citation type="journal article" date="1998" name="J. Bacteriol.">
        <title>Insertion mutation of the form I cbbL gene encoding ribulose bisphosphate carboxylase/oxygenase (RuBisCO) in Thiobacillus neapolitanus results in expression of form II RuBisCO, loss of carboxysomes, and an increased CO2 requirement for growth.</title>
        <authorList>
            <person name="Baker S.H."/>
            <person name="Jin S."/>
            <person name="Aldrich H.C."/>
            <person name="Howard G.T."/>
            <person name="Shively J.M."/>
        </authorList>
    </citation>
    <scope>SUBCELLULAR LOCATION</scope>
    <scope>INDUCTION</scope>
    <source>
        <strain>ATCC 23641 / c2</strain>
    </source>
</reference>
<keyword id="KW-0113">Calvin cycle</keyword>
<keyword id="KW-0120">Carbon dioxide fixation</keyword>
<keyword id="KW-0963">Cytoplasm</keyword>
<keyword id="KW-0456">Lyase</keyword>
<keyword id="KW-0460">Magnesium</keyword>
<keyword id="KW-0479">Metal-binding</keyword>
<keyword id="KW-0503">Monooxygenase</keyword>
<keyword id="KW-0560">Oxidoreductase</keyword>
<keyword id="KW-1185">Reference proteome</keyword>
<comment type="function">
    <text evidence="1">RuBisCO catalyzes two reactions: the carboxylation of D-ribulose 1,5-bisphosphate, the primary event in carbon dioxide fixation, as well as the oxidative fragmentation of the pentose substrate. Both reactions occur simultaneously and in competition at the same active site.</text>
</comment>
<comment type="catalytic activity">
    <reaction evidence="1">
        <text>2 (2R)-3-phosphoglycerate + 2 H(+) = D-ribulose 1,5-bisphosphate + CO2 + H2O</text>
        <dbReference type="Rhea" id="RHEA:23124"/>
        <dbReference type="ChEBI" id="CHEBI:15377"/>
        <dbReference type="ChEBI" id="CHEBI:15378"/>
        <dbReference type="ChEBI" id="CHEBI:16526"/>
        <dbReference type="ChEBI" id="CHEBI:57870"/>
        <dbReference type="ChEBI" id="CHEBI:58272"/>
        <dbReference type="EC" id="4.1.1.39"/>
    </reaction>
</comment>
<comment type="catalytic activity">
    <reaction evidence="1">
        <text>D-ribulose 1,5-bisphosphate + O2 = 2-phosphoglycolate + (2R)-3-phosphoglycerate + 2 H(+)</text>
        <dbReference type="Rhea" id="RHEA:36631"/>
        <dbReference type="ChEBI" id="CHEBI:15378"/>
        <dbReference type="ChEBI" id="CHEBI:15379"/>
        <dbReference type="ChEBI" id="CHEBI:57870"/>
        <dbReference type="ChEBI" id="CHEBI:58033"/>
        <dbReference type="ChEBI" id="CHEBI:58272"/>
    </reaction>
</comment>
<comment type="cofactor">
    <cofactor evidence="1">
        <name>Mg(2+)</name>
        <dbReference type="ChEBI" id="CHEBI:18420"/>
    </cofactor>
    <text evidence="1">Binds 1 Mg(2+) ion per subunit.</text>
</comment>
<comment type="subunit">
    <text evidence="1">Homodimer.</text>
</comment>
<comment type="subcellular location">
    <subcellularLocation>
        <location evidence="4">Cytoplasm</location>
    </subcellularLocation>
</comment>
<comment type="induction">
    <text evidence="2">Form II RuBisCO is expressed in the presence of form I, when grown in air with or without 5% CO(2), although it is not the major activity. When the form I gene is disrupted the RuBisCO form II activity increases, but is not found in carboxysomes (at protein level).</text>
</comment>
<comment type="miscellaneous">
    <text evidence="1">The basic functional RuBisCO is composed of a large chain homodimer in a 'head-to-tail' conformation. In contrast to form I RuBisCO, the form II RuBisCO are composed solely of large subunits.</text>
</comment>
<comment type="similarity">
    <text evidence="1">Belongs to the RuBisCO large chain family. Type II subfamily.</text>
</comment>
<feature type="chain" id="PRO_0000062670" description="Ribulose bisphosphate carboxylase">
    <location>
        <begin position="1"/>
        <end position="459"/>
    </location>
</feature>
<feature type="active site" description="Proton acceptor" evidence="1">
    <location>
        <position position="166"/>
    </location>
</feature>
<feature type="active site" description="Proton acceptor" evidence="1">
    <location>
        <position position="287"/>
    </location>
</feature>
<feature type="binding site" description="in homodimeric partner" evidence="1">
    <location>
        <position position="111"/>
    </location>
    <ligand>
        <name>substrate</name>
    </ligand>
</feature>
<feature type="binding site" evidence="1">
    <location>
        <position position="168"/>
    </location>
    <ligand>
        <name>substrate</name>
    </ligand>
</feature>
<feature type="binding site" description="via carbamate group" evidence="1">
    <location>
        <position position="191"/>
    </location>
    <ligand>
        <name>Mg(2+)</name>
        <dbReference type="ChEBI" id="CHEBI:18420"/>
    </ligand>
</feature>
<feature type="binding site" evidence="1">
    <location>
        <position position="193"/>
    </location>
    <ligand>
        <name>Mg(2+)</name>
        <dbReference type="ChEBI" id="CHEBI:18420"/>
    </ligand>
</feature>
<feature type="binding site" evidence="1">
    <location>
        <position position="194"/>
    </location>
    <ligand>
        <name>Mg(2+)</name>
        <dbReference type="ChEBI" id="CHEBI:18420"/>
    </ligand>
</feature>
<feature type="binding site" evidence="1">
    <location>
        <position position="288"/>
    </location>
    <ligand>
        <name>substrate</name>
    </ligand>
</feature>
<feature type="binding site" evidence="1">
    <location>
        <position position="321"/>
    </location>
    <ligand>
        <name>substrate</name>
    </ligand>
</feature>
<feature type="binding site" evidence="1">
    <location>
        <position position="368"/>
    </location>
    <ligand>
        <name>substrate</name>
    </ligand>
</feature>
<feature type="site" description="Transition state stabilizer" evidence="1">
    <location>
        <position position="329"/>
    </location>
</feature>
<feature type="modified residue" description="N6-carboxylysine" evidence="1">
    <location>
        <position position="191"/>
    </location>
</feature>
<protein>
    <recommendedName>
        <fullName evidence="1">Ribulose bisphosphate carboxylase</fullName>
        <shortName evidence="1">RuBisCO</shortName>
        <ecNumber evidence="1">4.1.1.39</ecNumber>
    </recommendedName>
    <alternativeName>
        <fullName evidence="3">Form II RuBisCO</fullName>
    </alternativeName>
</protein>
<gene>
    <name evidence="1" type="primary">cbbM</name>
    <name type="ordered locus">Hneap_1095</name>
</gene>
<proteinExistence type="evidence at protein level"/>
<organism>
    <name type="scientific">Halothiobacillus neapolitanus (strain ATCC 23641 / c2)</name>
    <name type="common">Thiobacillus neapolitanus</name>
    <dbReference type="NCBI Taxonomy" id="555778"/>
    <lineage>
        <taxon>Bacteria</taxon>
        <taxon>Pseudomonadati</taxon>
        <taxon>Pseudomonadota</taxon>
        <taxon>Gammaproteobacteria</taxon>
        <taxon>Chromatiales</taxon>
        <taxon>Halothiobacillaceae</taxon>
        <taxon>Halothiobacillus</taxon>
    </lineage>
</organism>
<accession>Q9ZHZ4</accession>
<accession>D0KZQ8</accession>
<sequence length="459" mass="50573">MDQSARYADLSLKEEDLIAGGKHILVAYKMKPKAGHGYLEASAHFAAESSTGTNVEVSTTDDFTKGVDALVYYIDEATEDMRIAYPMDLFDRNVTDGRMMLVSVLTLIIGNNQGMGDIEHAKIHDIYFPERAIQLFDGPSKDISDMWRILGRPIENGGYIAGTIIKPKLGLRPEPFAAAAYQFWLGGDFIKNDEPQGNQVFCPLKKVLPLVYDSMKRAQDETGQAKLFSMNITADDHYEMMARADFGLETFGPDADKLAFLVDGFVGGPGMITTARRQYPNQYLHYHRAGHGMITSPSAKRGYTAFVLAKISRLQGASGIHVGTMGYGKMEGEGDDRNIAYMIERDEAQGPVYFQKWYGMKPTTPIISGGMNALRLPGFFENLGHGNVINTAGGGSYGHIDSPAAGAISLKQAYECWKAGADPIEFAKEHKEFARAFESFPKDADAIFPGWREKLGVHK</sequence>
<evidence type="ECO:0000255" key="1">
    <source>
        <dbReference type="HAMAP-Rule" id="MF_01339"/>
    </source>
</evidence>
<evidence type="ECO:0000269" key="2">
    <source>
    </source>
</evidence>
<evidence type="ECO:0000303" key="3">
    <source>
    </source>
</evidence>
<evidence type="ECO:0000305" key="4">
    <source>
    </source>
</evidence>